<proteinExistence type="inferred from homology"/>
<name>PSBD_SYNJA</name>
<keyword id="KW-0148">Chlorophyll</keyword>
<keyword id="KW-0157">Chromophore</keyword>
<keyword id="KW-0249">Electron transport</keyword>
<keyword id="KW-0408">Iron</keyword>
<keyword id="KW-0460">Magnesium</keyword>
<keyword id="KW-0472">Membrane</keyword>
<keyword id="KW-0479">Metal-binding</keyword>
<keyword id="KW-0560">Oxidoreductase</keyword>
<keyword id="KW-0602">Photosynthesis</keyword>
<keyword id="KW-0604">Photosystem II</keyword>
<keyword id="KW-0793">Thylakoid</keyword>
<keyword id="KW-0812">Transmembrane</keyword>
<keyword id="KW-1133">Transmembrane helix</keyword>
<keyword id="KW-0813">Transport</keyword>
<dbReference type="EC" id="1.10.3.9" evidence="1"/>
<dbReference type="EMBL" id="CP000239">
    <property type="protein sequence ID" value="ABD00484.1"/>
    <property type="molecule type" value="Genomic_DNA"/>
</dbReference>
<dbReference type="EMBL" id="CP000239">
    <property type="protein sequence ID" value="ABD00759.1"/>
    <property type="molecule type" value="Genomic_DNA"/>
</dbReference>
<dbReference type="SMR" id="Q2JRJ5"/>
<dbReference type="STRING" id="321327.CYA_2358"/>
<dbReference type="KEGG" id="cya:CYA_2358"/>
<dbReference type="KEGG" id="cya:CYA_2647"/>
<dbReference type="eggNOG" id="ENOG502Z8JK">
    <property type="taxonomic scope" value="Bacteria"/>
</dbReference>
<dbReference type="HOGENOM" id="CLU_077965_0_0_3"/>
<dbReference type="OrthoDB" id="505356at2"/>
<dbReference type="Proteomes" id="UP000008818">
    <property type="component" value="Chromosome"/>
</dbReference>
<dbReference type="GO" id="GO:0009523">
    <property type="term" value="C:photosystem II"/>
    <property type="evidence" value="ECO:0007669"/>
    <property type="project" value="UniProtKB-KW"/>
</dbReference>
<dbReference type="GO" id="GO:0031676">
    <property type="term" value="C:plasma membrane-derived thylakoid membrane"/>
    <property type="evidence" value="ECO:0007669"/>
    <property type="project" value="UniProtKB-SubCell"/>
</dbReference>
<dbReference type="GO" id="GO:0016168">
    <property type="term" value="F:chlorophyll binding"/>
    <property type="evidence" value="ECO:0007669"/>
    <property type="project" value="UniProtKB-UniRule"/>
</dbReference>
<dbReference type="GO" id="GO:0045156">
    <property type="term" value="F:electron transporter, transferring electrons within the cyclic electron transport pathway of photosynthesis activity"/>
    <property type="evidence" value="ECO:0007669"/>
    <property type="project" value="InterPro"/>
</dbReference>
<dbReference type="GO" id="GO:0005506">
    <property type="term" value="F:iron ion binding"/>
    <property type="evidence" value="ECO:0007669"/>
    <property type="project" value="UniProtKB-UniRule"/>
</dbReference>
<dbReference type="GO" id="GO:0010242">
    <property type="term" value="F:oxygen evolving activity"/>
    <property type="evidence" value="ECO:0007669"/>
    <property type="project" value="UniProtKB-EC"/>
</dbReference>
<dbReference type="GO" id="GO:0009772">
    <property type="term" value="P:photosynthetic electron transport in photosystem II"/>
    <property type="evidence" value="ECO:0007669"/>
    <property type="project" value="InterPro"/>
</dbReference>
<dbReference type="CDD" id="cd09288">
    <property type="entry name" value="Photosystem-II_D2"/>
    <property type="match status" value="1"/>
</dbReference>
<dbReference type="FunFam" id="1.20.85.10:FF:000001">
    <property type="entry name" value="photosystem II D2 protein-like"/>
    <property type="match status" value="1"/>
</dbReference>
<dbReference type="Gene3D" id="1.20.85.10">
    <property type="entry name" value="Photosystem II protein D1-like"/>
    <property type="match status" value="1"/>
</dbReference>
<dbReference type="HAMAP" id="MF_01383">
    <property type="entry name" value="PSII_PsbD_D2"/>
    <property type="match status" value="1"/>
</dbReference>
<dbReference type="InterPro" id="IPR055266">
    <property type="entry name" value="D1/D2"/>
</dbReference>
<dbReference type="InterPro" id="IPR036854">
    <property type="entry name" value="Photo_II_D1/D2_sf"/>
</dbReference>
<dbReference type="InterPro" id="IPR000484">
    <property type="entry name" value="Photo_RC_L/M"/>
</dbReference>
<dbReference type="InterPro" id="IPR055265">
    <property type="entry name" value="Photo_RC_L/M_CS"/>
</dbReference>
<dbReference type="InterPro" id="IPR005868">
    <property type="entry name" value="PSII_PsbD/D2"/>
</dbReference>
<dbReference type="NCBIfam" id="TIGR01152">
    <property type="entry name" value="psbD"/>
    <property type="match status" value="1"/>
</dbReference>
<dbReference type="PANTHER" id="PTHR33149:SF12">
    <property type="entry name" value="PHOTOSYSTEM II D2 PROTEIN"/>
    <property type="match status" value="1"/>
</dbReference>
<dbReference type="PANTHER" id="PTHR33149">
    <property type="entry name" value="PHOTOSYSTEM II PROTEIN D1"/>
    <property type="match status" value="1"/>
</dbReference>
<dbReference type="Pfam" id="PF00124">
    <property type="entry name" value="Photo_RC"/>
    <property type="match status" value="1"/>
</dbReference>
<dbReference type="PRINTS" id="PR00256">
    <property type="entry name" value="REACTNCENTRE"/>
</dbReference>
<dbReference type="SUPFAM" id="SSF81483">
    <property type="entry name" value="Bacterial photosystem II reaction centre, L and M subunits"/>
    <property type="match status" value="1"/>
</dbReference>
<dbReference type="PROSITE" id="PS00244">
    <property type="entry name" value="REACTION_CENTER"/>
    <property type="match status" value="1"/>
</dbReference>
<sequence length="352" mass="39572">MTIAVGRARQERGWFDIVDDWLKRDRFVFIGWSGLLLFPCAYLALGGWLTGTTFVTSWYTHGLASSYLEGCNFLTVAVSTPADSMGHSLLLLWGPEAQGDFTRWCQIGGLWTFVAFHGALGLIGFMLRQFEIARLVGVRPYNAIAFSAPIAVFVSVFLIYPLGQSSWFFAPSFGVAAIFRFLLFFQGFHNWTLNPFHMMGVAGVLGGALLCAIHGATVENTLYKDGEAASTFRAFEPTQAEETYSMVTANRYWSQIFGIAFSNKRWLHFFMLFVPVTGLWMSSIGVVGLALNLRAYDFISQETRAAEDPEFETFYTKNILLNEGIRAWMAPQDQPHERFEFPEEVLPRGNAL</sequence>
<feature type="chain" id="PRO_0000359610" description="Photosystem II D2 protein">
    <location>
        <begin position="1"/>
        <end position="352"/>
    </location>
</feature>
<feature type="transmembrane region" description="Helical" evidence="1">
    <location>
        <begin position="40"/>
        <end position="60"/>
    </location>
</feature>
<feature type="transmembrane region" description="Helical" evidence="1">
    <location>
        <begin position="124"/>
        <end position="140"/>
    </location>
</feature>
<feature type="transmembrane region" description="Helical" evidence="1">
    <location>
        <begin position="152"/>
        <end position="165"/>
    </location>
</feature>
<feature type="transmembrane region" description="Helical" evidence="1">
    <location>
        <begin position="207"/>
        <end position="227"/>
    </location>
</feature>
<feature type="transmembrane region" description="Helical" evidence="1">
    <location>
        <begin position="278"/>
        <end position="294"/>
    </location>
</feature>
<feature type="binding site" description="axial binding residue" evidence="1">
    <location>
        <position position="117"/>
    </location>
    <ligand>
        <name>chlorophyll a</name>
        <dbReference type="ChEBI" id="CHEBI:58416"/>
        <label>ChlzD2</label>
    </ligand>
    <ligandPart>
        <name>Mg</name>
        <dbReference type="ChEBI" id="CHEBI:25107"/>
    </ligandPart>
</feature>
<feature type="binding site" evidence="1">
    <location>
        <position position="129"/>
    </location>
    <ligand>
        <name>pheophytin a</name>
        <dbReference type="ChEBI" id="CHEBI:136840"/>
        <label>D2</label>
    </ligand>
</feature>
<feature type="binding site" evidence="1">
    <location>
        <position position="142"/>
    </location>
    <ligand>
        <name>pheophytin a</name>
        <dbReference type="ChEBI" id="CHEBI:136840"/>
        <label>D2</label>
    </ligand>
</feature>
<feature type="binding site" description="axial binding residue" evidence="1">
    <location>
        <position position="197"/>
    </location>
    <ligand>
        <name>chlorophyll a</name>
        <dbReference type="ChEBI" id="CHEBI:58416"/>
        <label>PD2</label>
    </ligand>
    <ligandPart>
        <name>Mg</name>
        <dbReference type="ChEBI" id="CHEBI:25107"/>
    </ligandPart>
</feature>
<feature type="binding site" evidence="1">
    <location>
        <position position="214"/>
    </location>
    <ligand>
        <name>a plastoquinone</name>
        <dbReference type="ChEBI" id="CHEBI:17757"/>
        <label>Q(A)</label>
    </ligand>
</feature>
<feature type="binding site" evidence="1">
    <location>
        <position position="214"/>
    </location>
    <ligand>
        <name>Fe cation</name>
        <dbReference type="ChEBI" id="CHEBI:24875"/>
        <note>ligand shared with heterodimeric partner</note>
    </ligand>
</feature>
<feature type="binding site" evidence="1">
    <location>
        <position position="261"/>
    </location>
    <ligand>
        <name>a plastoquinone</name>
        <dbReference type="ChEBI" id="CHEBI:17757"/>
        <label>Q(A)</label>
    </ligand>
</feature>
<feature type="binding site" evidence="1">
    <location>
        <position position="268"/>
    </location>
    <ligand>
        <name>Fe cation</name>
        <dbReference type="ChEBI" id="CHEBI:24875"/>
        <note>ligand shared with heterodimeric partner</note>
    </ligand>
</feature>
<organism>
    <name type="scientific">Synechococcus sp. (strain JA-3-3Ab)</name>
    <name type="common">Cyanobacteria bacterium Yellowstone A-Prime</name>
    <dbReference type="NCBI Taxonomy" id="321327"/>
    <lineage>
        <taxon>Bacteria</taxon>
        <taxon>Bacillati</taxon>
        <taxon>Cyanobacteriota</taxon>
        <taxon>Cyanophyceae</taxon>
        <taxon>Synechococcales</taxon>
        <taxon>Synechococcaceae</taxon>
        <taxon>Synechococcus</taxon>
    </lineage>
</organism>
<comment type="function">
    <text evidence="1">Photosystem II (PSII) is a light-driven water:plastoquinone oxidoreductase that uses light energy to abstract electrons from H(2)O, generating O(2) and a proton gradient subsequently used for ATP formation. It consists of a core antenna complex that captures photons, and an electron transfer chain that converts photonic excitation into a charge separation. The D1/D2 (PsbA/PsbD) reaction center heterodimer binds P680, the primary electron donor of PSII as well as several subsequent electron acceptors. D2 is needed for assembly of a stable PSII complex.</text>
</comment>
<comment type="catalytic activity">
    <reaction evidence="1">
        <text>2 a plastoquinone + 4 hnu + 2 H2O = 2 a plastoquinol + O2</text>
        <dbReference type="Rhea" id="RHEA:36359"/>
        <dbReference type="Rhea" id="RHEA-COMP:9561"/>
        <dbReference type="Rhea" id="RHEA-COMP:9562"/>
        <dbReference type="ChEBI" id="CHEBI:15377"/>
        <dbReference type="ChEBI" id="CHEBI:15379"/>
        <dbReference type="ChEBI" id="CHEBI:17757"/>
        <dbReference type="ChEBI" id="CHEBI:30212"/>
        <dbReference type="ChEBI" id="CHEBI:62192"/>
        <dbReference type="EC" id="1.10.3.9"/>
    </reaction>
</comment>
<comment type="cofactor">
    <text evidence="1">The D1/D2 heterodimer binds P680, chlorophylls that are the primary electron donor of PSII, and subsequent electron acceptors. It shares a non-heme iron and each subunit binds pheophytin, quinone, additional chlorophylls, carotenoids and lipids. There is also a Cl(-1) ion associated with D1 and D2, which is required for oxygen evolution. The PSII complex binds additional chlorophylls, carotenoids and specific lipids.</text>
</comment>
<comment type="subunit">
    <text evidence="1">PSII is composed of 1 copy each of membrane proteins PsbA, PsbB, PsbC, PsbD, PsbE, PsbF, PsbH, PsbI, PsbJ, PsbK, PsbL, PsbM, PsbT, PsbX, PsbY, PsbZ, Psb30/Ycf12, peripheral proteins PsbO, CyanoQ (PsbQ), PsbU, PsbV and a large number of cofactors. It forms dimeric complexes.</text>
</comment>
<comment type="subcellular location">
    <subcellularLocation>
        <location evidence="1">Cellular thylakoid membrane</location>
        <topology evidence="1">Multi-pass membrane protein</topology>
    </subcellularLocation>
</comment>
<comment type="miscellaneous">
    <text evidence="1">2 of the reaction center chlorophylls (ChlD1 and ChlD2) are entirely coordinated by water.</text>
</comment>
<comment type="similarity">
    <text evidence="1">Belongs to the reaction center PufL/M/PsbA/D family.</text>
</comment>
<accession>Q2JRJ5</accession>
<reference key="1">
    <citation type="journal article" date="2007" name="ISME J.">
        <title>Population level functional diversity in a microbial community revealed by comparative genomic and metagenomic analyses.</title>
        <authorList>
            <person name="Bhaya D."/>
            <person name="Grossman A.R."/>
            <person name="Steunou A.-S."/>
            <person name="Khuri N."/>
            <person name="Cohan F.M."/>
            <person name="Hamamura N."/>
            <person name="Melendrez M.C."/>
            <person name="Bateson M.M."/>
            <person name="Ward D.M."/>
            <person name="Heidelberg J.F."/>
        </authorList>
    </citation>
    <scope>NUCLEOTIDE SEQUENCE [LARGE SCALE GENOMIC DNA]</scope>
    <source>
        <strain>JA-3-3Ab</strain>
    </source>
</reference>
<evidence type="ECO:0000255" key="1">
    <source>
        <dbReference type="HAMAP-Rule" id="MF_01383"/>
    </source>
</evidence>
<protein>
    <recommendedName>
        <fullName evidence="1">Photosystem II D2 protein</fullName>
        <shortName evidence="1">PSII D2 protein</shortName>
        <ecNumber evidence="1">1.10.3.9</ecNumber>
    </recommendedName>
    <alternativeName>
        <fullName evidence="1">Photosystem Q(A) protein</fullName>
    </alternativeName>
</protein>
<gene>
    <name evidence="1" type="primary">psbD1</name>
    <name type="ordered locus">CYA_2358</name>
</gene>
<gene>
    <name evidence="1" type="primary">psbD2</name>
    <name type="ordered locus">CYA_2647</name>
</gene>